<evidence type="ECO:0000255" key="1">
    <source>
        <dbReference type="HAMAP-Rule" id="MF_00375"/>
    </source>
</evidence>
<keyword id="KW-0963">Cytoplasm</keyword>
<keyword id="KW-0413">Isomerase</keyword>
<keyword id="KW-0627">Porphyrin biosynthesis</keyword>
<keyword id="KW-0663">Pyridoxal phosphate</keyword>
<dbReference type="EC" id="5.4.3.8" evidence="1"/>
<dbReference type="EMBL" id="CP001598">
    <property type="protein sequence ID" value="ACQ50655.1"/>
    <property type="molecule type" value="Genomic_DNA"/>
</dbReference>
<dbReference type="RefSeq" id="WP_001224513.1">
    <property type="nucleotide sequence ID" value="NC_012659.1"/>
</dbReference>
<dbReference type="SMR" id="C3P9E6"/>
<dbReference type="GeneID" id="45024333"/>
<dbReference type="KEGG" id="bai:BAA_4711"/>
<dbReference type="HOGENOM" id="CLU_016922_1_5_9"/>
<dbReference type="UniPathway" id="UPA00251">
    <property type="reaction ID" value="UER00317"/>
</dbReference>
<dbReference type="GO" id="GO:0005737">
    <property type="term" value="C:cytoplasm"/>
    <property type="evidence" value="ECO:0007669"/>
    <property type="project" value="UniProtKB-SubCell"/>
</dbReference>
<dbReference type="GO" id="GO:0042286">
    <property type="term" value="F:glutamate-1-semialdehyde 2,1-aminomutase activity"/>
    <property type="evidence" value="ECO:0007669"/>
    <property type="project" value="UniProtKB-UniRule"/>
</dbReference>
<dbReference type="GO" id="GO:0030170">
    <property type="term" value="F:pyridoxal phosphate binding"/>
    <property type="evidence" value="ECO:0007669"/>
    <property type="project" value="InterPro"/>
</dbReference>
<dbReference type="GO" id="GO:0008483">
    <property type="term" value="F:transaminase activity"/>
    <property type="evidence" value="ECO:0007669"/>
    <property type="project" value="InterPro"/>
</dbReference>
<dbReference type="GO" id="GO:0006782">
    <property type="term" value="P:protoporphyrinogen IX biosynthetic process"/>
    <property type="evidence" value="ECO:0007669"/>
    <property type="project" value="UniProtKB-UniRule"/>
</dbReference>
<dbReference type="CDD" id="cd00610">
    <property type="entry name" value="OAT_like"/>
    <property type="match status" value="1"/>
</dbReference>
<dbReference type="FunFam" id="3.40.640.10:FF:000021">
    <property type="entry name" value="Glutamate-1-semialdehyde 2,1-aminomutase"/>
    <property type="match status" value="1"/>
</dbReference>
<dbReference type="Gene3D" id="3.90.1150.10">
    <property type="entry name" value="Aspartate Aminotransferase, domain 1"/>
    <property type="match status" value="1"/>
</dbReference>
<dbReference type="Gene3D" id="3.40.640.10">
    <property type="entry name" value="Type I PLP-dependent aspartate aminotransferase-like (Major domain)"/>
    <property type="match status" value="1"/>
</dbReference>
<dbReference type="HAMAP" id="MF_00375">
    <property type="entry name" value="HemL_aminotrans_3"/>
    <property type="match status" value="1"/>
</dbReference>
<dbReference type="InterPro" id="IPR004639">
    <property type="entry name" value="4pyrrol_synth_GluAld_NH2Trfase"/>
</dbReference>
<dbReference type="InterPro" id="IPR005814">
    <property type="entry name" value="Aminotrans_3"/>
</dbReference>
<dbReference type="InterPro" id="IPR049704">
    <property type="entry name" value="Aminotrans_3_PPA_site"/>
</dbReference>
<dbReference type="InterPro" id="IPR015424">
    <property type="entry name" value="PyrdxlP-dep_Trfase"/>
</dbReference>
<dbReference type="InterPro" id="IPR015421">
    <property type="entry name" value="PyrdxlP-dep_Trfase_major"/>
</dbReference>
<dbReference type="InterPro" id="IPR015422">
    <property type="entry name" value="PyrdxlP-dep_Trfase_small"/>
</dbReference>
<dbReference type="NCBIfam" id="TIGR00713">
    <property type="entry name" value="hemL"/>
    <property type="match status" value="1"/>
</dbReference>
<dbReference type="NCBIfam" id="NF000818">
    <property type="entry name" value="PRK00062.1"/>
    <property type="match status" value="1"/>
</dbReference>
<dbReference type="PANTHER" id="PTHR43713">
    <property type="entry name" value="GLUTAMATE-1-SEMIALDEHYDE 2,1-AMINOMUTASE"/>
    <property type="match status" value="1"/>
</dbReference>
<dbReference type="PANTHER" id="PTHR43713:SF3">
    <property type="entry name" value="GLUTAMATE-1-SEMIALDEHYDE 2,1-AMINOMUTASE 1, CHLOROPLASTIC-RELATED"/>
    <property type="match status" value="1"/>
</dbReference>
<dbReference type="Pfam" id="PF00202">
    <property type="entry name" value="Aminotran_3"/>
    <property type="match status" value="1"/>
</dbReference>
<dbReference type="SUPFAM" id="SSF53383">
    <property type="entry name" value="PLP-dependent transferases"/>
    <property type="match status" value="1"/>
</dbReference>
<dbReference type="PROSITE" id="PS00600">
    <property type="entry name" value="AA_TRANSFER_CLASS_3"/>
    <property type="match status" value="1"/>
</dbReference>
<reference key="1">
    <citation type="submission" date="2009-04" db="EMBL/GenBank/DDBJ databases">
        <title>Genome sequence of Bacillus anthracis A0248.</title>
        <authorList>
            <person name="Dodson R.J."/>
            <person name="Munk A.C."/>
            <person name="Bruce D."/>
            <person name="Detter C."/>
            <person name="Tapia R."/>
            <person name="Sutton G."/>
            <person name="Sims D."/>
            <person name="Brettin T."/>
        </authorList>
    </citation>
    <scope>NUCLEOTIDE SEQUENCE [LARGE SCALE GENOMIC DNA]</scope>
    <source>
        <strain>A0248</strain>
    </source>
</reference>
<gene>
    <name evidence="1" type="primary">hemL2</name>
    <name type="ordered locus">BAA_4711</name>
</gene>
<protein>
    <recommendedName>
        <fullName evidence="1">Glutamate-1-semialdehyde 2,1-aminomutase 2</fullName>
        <shortName evidence="1">GSA 2</shortName>
        <ecNumber evidence="1">5.4.3.8</ecNumber>
    </recommendedName>
    <alternativeName>
        <fullName evidence="1">Glutamate-1-semialdehyde aminotransferase 2</fullName>
        <shortName evidence="1">GSA-AT 2</shortName>
    </alternativeName>
</protein>
<organism>
    <name type="scientific">Bacillus anthracis (strain A0248)</name>
    <dbReference type="NCBI Taxonomy" id="592021"/>
    <lineage>
        <taxon>Bacteria</taxon>
        <taxon>Bacillati</taxon>
        <taxon>Bacillota</taxon>
        <taxon>Bacilli</taxon>
        <taxon>Bacillales</taxon>
        <taxon>Bacillaceae</taxon>
        <taxon>Bacillus</taxon>
        <taxon>Bacillus cereus group</taxon>
    </lineage>
</organism>
<sequence>MRKFDKSIAAFEEAQDLMPGGVNSPVRAFKSVGMNPLFMERGKGSKVYDIDGNEYIDYVLSWGPLIHGHANDRVVEALKAVAERGTSFGAPTEIENKLAKLVIERVPSIEIVRMVNSGTEATMSALRLARGYTGRNKILKFIGCYHGHGDSLLIKAGSGVATLGLPDSPGVPEGVAKNTITVAYNDLESVKYAFEQFGDDIACVIVEPVAGNMGVVPPQPGFLEGLREVTEQNGALLIFDEVMTGFRVAYNCGQGYYGVTPDLTCLGKVIGGGLPVGAYGGKAEIMRQVAPSGPIYQAGTLSGNPLAMAAGYETLVQLTPESYVEFERKAEMLEAGLRKAAEKHGIPHHINRAGSMIGIFFTDEPVINYDAAKSSNLQFFAAYYREMVEQGVFLPPSQFEGLFLSTVHSDADIEATIAAAEIAMSKLKA</sequence>
<accession>C3P9E6</accession>
<feature type="chain" id="PRO_0000382260" description="Glutamate-1-semialdehyde 2,1-aminomutase 2">
    <location>
        <begin position="1"/>
        <end position="429"/>
    </location>
</feature>
<feature type="modified residue" description="N6-(pyridoxal phosphate)lysine" evidence="1">
    <location>
        <position position="268"/>
    </location>
</feature>
<name>GSA2_BACAA</name>
<proteinExistence type="inferred from homology"/>
<comment type="catalytic activity">
    <reaction evidence="1">
        <text>(S)-4-amino-5-oxopentanoate = 5-aminolevulinate</text>
        <dbReference type="Rhea" id="RHEA:14265"/>
        <dbReference type="ChEBI" id="CHEBI:57501"/>
        <dbReference type="ChEBI" id="CHEBI:356416"/>
        <dbReference type="EC" id="5.4.3.8"/>
    </reaction>
</comment>
<comment type="cofactor">
    <cofactor evidence="1">
        <name>pyridoxal 5'-phosphate</name>
        <dbReference type="ChEBI" id="CHEBI:597326"/>
    </cofactor>
</comment>
<comment type="pathway">
    <text evidence="1">Porphyrin-containing compound metabolism; protoporphyrin-IX biosynthesis; 5-aminolevulinate from L-glutamyl-tRNA(Glu): step 2/2.</text>
</comment>
<comment type="subunit">
    <text evidence="1">Homodimer.</text>
</comment>
<comment type="subcellular location">
    <subcellularLocation>
        <location evidence="1">Cytoplasm</location>
    </subcellularLocation>
</comment>
<comment type="similarity">
    <text evidence="1">Belongs to the class-III pyridoxal-phosphate-dependent aminotransferase family. HemL subfamily.</text>
</comment>